<comment type="function">
    <text evidence="2">Component of the ubiquinol-cytochrome c reductase complex (complex III or cytochrome b-c1 complex) that is part of the mitochondrial respiratory chain. The b-c1 complex mediates electron transfer from ubiquinol to cytochrome c. Contributes to the generation of a proton gradient across the mitochondrial membrane that is then used for ATP synthesis.</text>
</comment>
<comment type="cofactor">
    <cofactor evidence="2">
        <name>heme b</name>
        <dbReference type="ChEBI" id="CHEBI:60344"/>
    </cofactor>
    <text evidence="2">Binds 2 heme b groups non-covalently.</text>
</comment>
<comment type="subunit">
    <text evidence="2">The cytochrome bc1 complex contains 3 respiratory subunits (MT-CYB, CYC1 and UQCRFS1), 2 core proteins (UQCRC1 and UQCRC2) and probably 6 low-molecular weight proteins.</text>
</comment>
<comment type="subcellular location">
    <subcellularLocation>
        <location evidence="2">Mitochondrion inner membrane</location>
        <topology evidence="2">Multi-pass membrane protein</topology>
    </subcellularLocation>
</comment>
<comment type="miscellaneous">
    <text evidence="1">Heme 1 (or BL or b562) is low-potential and absorbs at about 562 nm, and heme 2 (or BH or b566) is high-potential and absorbs at about 566 nm.</text>
</comment>
<comment type="similarity">
    <text evidence="3 4">Belongs to the cytochrome b family.</text>
</comment>
<comment type="caution">
    <text evidence="2">The full-length protein contains only eight transmembrane helices, not nine as predicted by bioinformatics tools.</text>
</comment>
<keyword id="KW-0249">Electron transport</keyword>
<keyword id="KW-0349">Heme</keyword>
<keyword id="KW-0408">Iron</keyword>
<keyword id="KW-0472">Membrane</keyword>
<keyword id="KW-0479">Metal-binding</keyword>
<keyword id="KW-0496">Mitochondrion</keyword>
<keyword id="KW-0999">Mitochondrion inner membrane</keyword>
<keyword id="KW-0679">Respiratory chain</keyword>
<keyword id="KW-0812">Transmembrane</keyword>
<keyword id="KW-1133">Transmembrane helix</keyword>
<keyword id="KW-0813">Transport</keyword>
<keyword id="KW-0830">Ubiquinone</keyword>
<protein>
    <recommendedName>
        <fullName>Cytochrome b</fullName>
    </recommendedName>
    <alternativeName>
        <fullName>Complex III subunit 3</fullName>
    </alternativeName>
    <alternativeName>
        <fullName>Complex III subunit III</fullName>
    </alternativeName>
    <alternativeName>
        <fullName>Cytochrome b-c1 complex subunit 3</fullName>
    </alternativeName>
    <alternativeName>
        <fullName>Ubiquinol-cytochrome-c reductase complex cytochrome b subunit</fullName>
    </alternativeName>
</protein>
<organism>
    <name type="scientific">Heterodontus francisci</name>
    <name type="common">Horn shark</name>
    <name type="synonym">Cestracion francisci</name>
    <dbReference type="NCBI Taxonomy" id="7792"/>
    <lineage>
        <taxon>Eukaryota</taxon>
        <taxon>Metazoa</taxon>
        <taxon>Chordata</taxon>
        <taxon>Craniata</taxon>
        <taxon>Vertebrata</taxon>
        <taxon>Chondrichthyes</taxon>
        <taxon>Elasmobranchii</taxon>
        <taxon>Galeomorphii</taxon>
        <taxon>Heterodontoidea</taxon>
        <taxon>Heterodontiformes</taxon>
        <taxon>Heterodontidae</taxon>
        <taxon>Heterodontus</taxon>
    </lineage>
</organism>
<feature type="chain" id="PRO_0000061034" description="Cytochrome b">
    <location>
        <begin position="1"/>
        <end position="381"/>
    </location>
</feature>
<feature type="transmembrane region" description="Helical" evidence="2">
    <location>
        <begin position="34"/>
        <end position="54"/>
    </location>
</feature>
<feature type="transmembrane region" description="Helical" evidence="2">
    <location>
        <begin position="78"/>
        <end position="99"/>
    </location>
</feature>
<feature type="transmembrane region" description="Helical" evidence="2">
    <location>
        <begin position="114"/>
        <end position="134"/>
    </location>
</feature>
<feature type="transmembrane region" description="Helical" evidence="2">
    <location>
        <begin position="179"/>
        <end position="199"/>
    </location>
</feature>
<feature type="transmembrane region" description="Helical" evidence="2">
    <location>
        <begin position="227"/>
        <end position="247"/>
    </location>
</feature>
<feature type="transmembrane region" description="Helical" evidence="2">
    <location>
        <begin position="289"/>
        <end position="309"/>
    </location>
</feature>
<feature type="transmembrane region" description="Helical" evidence="2">
    <location>
        <begin position="321"/>
        <end position="341"/>
    </location>
</feature>
<feature type="transmembrane region" description="Helical" evidence="2">
    <location>
        <begin position="348"/>
        <end position="368"/>
    </location>
</feature>
<feature type="binding site" description="axial binding residue" evidence="2">
    <location>
        <position position="84"/>
    </location>
    <ligand>
        <name>heme b</name>
        <dbReference type="ChEBI" id="CHEBI:60344"/>
        <label>b562</label>
    </ligand>
    <ligandPart>
        <name>Fe</name>
        <dbReference type="ChEBI" id="CHEBI:18248"/>
    </ligandPart>
</feature>
<feature type="binding site" description="axial binding residue" evidence="2">
    <location>
        <position position="98"/>
    </location>
    <ligand>
        <name>heme b</name>
        <dbReference type="ChEBI" id="CHEBI:60344"/>
        <label>b566</label>
    </ligand>
    <ligandPart>
        <name>Fe</name>
        <dbReference type="ChEBI" id="CHEBI:18248"/>
    </ligandPart>
</feature>
<feature type="binding site" description="axial binding residue" evidence="2">
    <location>
        <position position="183"/>
    </location>
    <ligand>
        <name>heme b</name>
        <dbReference type="ChEBI" id="CHEBI:60344"/>
        <label>b562</label>
    </ligand>
    <ligandPart>
        <name>Fe</name>
        <dbReference type="ChEBI" id="CHEBI:18248"/>
    </ligandPart>
</feature>
<feature type="binding site" description="axial binding residue" evidence="2">
    <location>
        <position position="197"/>
    </location>
    <ligand>
        <name>heme b</name>
        <dbReference type="ChEBI" id="CHEBI:60344"/>
        <label>b566</label>
    </ligand>
    <ligandPart>
        <name>Fe</name>
        <dbReference type="ChEBI" id="CHEBI:18248"/>
    </ligandPart>
</feature>
<feature type="binding site" evidence="2">
    <location>
        <position position="202"/>
    </location>
    <ligand>
        <name>a ubiquinone</name>
        <dbReference type="ChEBI" id="CHEBI:16389"/>
    </ligand>
</feature>
<evidence type="ECO:0000250" key="1"/>
<evidence type="ECO:0000250" key="2">
    <source>
        <dbReference type="UniProtKB" id="P00157"/>
    </source>
</evidence>
<evidence type="ECO:0000255" key="3">
    <source>
        <dbReference type="PROSITE-ProRule" id="PRU00967"/>
    </source>
</evidence>
<evidence type="ECO:0000255" key="4">
    <source>
        <dbReference type="PROSITE-ProRule" id="PRU00968"/>
    </source>
</evidence>
<gene>
    <name type="primary">mt-cyb</name>
    <name type="synonym">cob</name>
    <name type="synonym">cytb</name>
    <name type="synonym">mtcyb</name>
</gene>
<sequence length="381" mass="43192">MATNIRKTHPLLKIINHALVDLPAPSNISAWWNFGSLLVLCLAVQILTGLFLAMHYTADISLAFSSVIHICRDVNYGWLIRNIHANGASLFFICIYLHIARGLYYGSYLLKETWNIGVILLFLLMATAFVGYVLPWGQMSFWGATVITNLLSAFPYIGDTLVQWIWGGFSIDNATLTRFFAFHFLLPFLIIALTMLHFLFLHETGSNNPLGLNSDMDKIPFHPYFTYKDILGFFTMTLFLGALVLFLPNLLGDAENFIPANPLVTPPHIKPEWYFLFAYAILRSIPNKLGGVLALLFSILMLLLVPFLHTSKQRTNTFRPLTQLLFWTLVANTIILTWIGGQPVEQPFIFIGQIASITYFSLFLIITPFISWCENKILSLN</sequence>
<accession>P34869</accession>
<dbReference type="EMBL" id="L08035">
    <property type="protein sequence ID" value="AAA97499.1"/>
    <property type="molecule type" value="Genomic_DNA"/>
</dbReference>
<dbReference type="SMR" id="P34869"/>
<dbReference type="GO" id="GO:0005743">
    <property type="term" value="C:mitochondrial inner membrane"/>
    <property type="evidence" value="ECO:0007669"/>
    <property type="project" value="UniProtKB-SubCell"/>
</dbReference>
<dbReference type="GO" id="GO:0045275">
    <property type="term" value="C:respiratory chain complex III"/>
    <property type="evidence" value="ECO:0007669"/>
    <property type="project" value="InterPro"/>
</dbReference>
<dbReference type="GO" id="GO:0046872">
    <property type="term" value="F:metal ion binding"/>
    <property type="evidence" value="ECO:0007669"/>
    <property type="project" value="UniProtKB-KW"/>
</dbReference>
<dbReference type="GO" id="GO:0008121">
    <property type="term" value="F:ubiquinol-cytochrome-c reductase activity"/>
    <property type="evidence" value="ECO:0007669"/>
    <property type="project" value="InterPro"/>
</dbReference>
<dbReference type="GO" id="GO:0006122">
    <property type="term" value="P:mitochondrial electron transport, ubiquinol to cytochrome c"/>
    <property type="evidence" value="ECO:0007669"/>
    <property type="project" value="TreeGrafter"/>
</dbReference>
<dbReference type="CDD" id="cd00290">
    <property type="entry name" value="cytochrome_b_C"/>
    <property type="match status" value="1"/>
</dbReference>
<dbReference type="CDD" id="cd00284">
    <property type="entry name" value="Cytochrome_b_N"/>
    <property type="match status" value="1"/>
</dbReference>
<dbReference type="FunFam" id="1.20.810.10:FF:000002">
    <property type="entry name" value="Cytochrome b"/>
    <property type="match status" value="1"/>
</dbReference>
<dbReference type="Gene3D" id="1.20.810.10">
    <property type="entry name" value="Cytochrome Bc1 Complex, Chain C"/>
    <property type="match status" value="1"/>
</dbReference>
<dbReference type="InterPro" id="IPR005798">
    <property type="entry name" value="Cyt_b/b6_C"/>
</dbReference>
<dbReference type="InterPro" id="IPR036150">
    <property type="entry name" value="Cyt_b/b6_C_sf"/>
</dbReference>
<dbReference type="InterPro" id="IPR005797">
    <property type="entry name" value="Cyt_b/b6_N"/>
</dbReference>
<dbReference type="InterPro" id="IPR027387">
    <property type="entry name" value="Cytb/b6-like_sf"/>
</dbReference>
<dbReference type="InterPro" id="IPR030689">
    <property type="entry name" value="Cytochrome_b"/>
</dbReference>
<dbReference type="InterPro" id="IPR048260">
    <property type="entry name" value="Cytochrome_b_C_euk/bac"/>
</dbReference>
<dbReference type="InterPro" id="IPR048259">
    <property type="entry name" value="Cytochrome_b_N_euk/bac"/>
</dbReference>
<dbReference type="InterPro" id="IPR016174">
    <property type="entry name" value="Di-haem_cyt_TM"/>
</dbReference>
<dbReference type="PANTHER" id="PTHR19271">
    <property type="entry name" value="CYTOCHROME B"/>
    <property type="match status" value="1"/>
</dbReference>
<dbReference type="PANTHER" id="PTHR19271:SF16">
    <property type="entry name" value="CYTOCHROME B"/>
    <property type="match status" value="1"/>
</dbReference>
<dbReference type="Pfam" id="PF00032">
    <property type="entry name" value="Cytochrom_B_C"/>
    <property type="match status" value="1"/>
</dbReference>
<dbReference type="Pfam" id="PF00033">
    <property type="entry name" value="Cytochrome_B"/>
    <property type="match status" value="1"/>
</dbReference>
<dbReference type="PIRSF" id="PIRSF038885">
    <property type="entry name" value="COB"/>
    <property type="match status" value="1"/>
</dbReference>
<dbReference type="SUPFAM" id="SSF81648">
    <property type="entry name" value="a domain/subunit of cytochrome bc1 complex (Ubiquinol-cytochrome c reductase)"/>
    <property type="match status" value="1"/>
</dbReference>
<dbReference type="SUPFAM" id="SSF81342">
    <property type="entry name" value="Transmembrane di-heme cytochromes"/>
    <property type="match status" value="1"/>
</dbReference>
<dbReference type="PROSITE" id="PS51003">
    <property type="entry name" value="CYTB_CTER"/>
    <property type="match status" value="1"/>
</dbReference>
<dbReference type="PROSITE" id="PS51002">
    <property type="entry name" value="CYTB_NTER"/>
    <property type="match status" value="1"/>
</dbReference>
<name>CYB_HETFR</name>
<reference key="1">
    <citation type="journal article" date="1992" name="Nature">
        <title>Rates of mitochondrial DNA evolution in sharks are slow compared with mammals.</title>
        <authorList>
            <person name="Martin A.P."/>
            <person name="Naylor G.J.P."/>
            <person name="Palumbi S.R."/>
        </authorList>
    </citation>
    <scope>NUCLEOTIDE SEQUENCE [GENOMIC DNA]</scope>
</reference>
<proteinExistence type="inferred from homology"/>
<geneLocation type="mitochondrion"/>